<feature type="chain" id="PRO_0000281111" description="Alpha/beta hydrolase domain-containing protein 17B">
    <location>
        <begin position="1"/>
        <end position="288"/>
    </location>
</feature>
<feature type="active site" description="Charge relay system" evidence="3">
    <location>
        <position position="170"/>
    </location>
</feature>
<feature type="active site" description="Charge relay system" evidence="1">
    <location>
        <position position="235"/>
    </location>
</feature>
<feature type="active site" description="Charge relay system" evidence="1">
    <location>
        <position position="264"/>
    </location>
</feature>
<feature type="modified residue" description="Phosphoserine" evidence="2">
    <location>
        <position position="282"/>
    </location>
</feature>
<feature type="splice variant" id="VSP_023975" description="In isoform 2." evidence="6">
    <original>NL</original>
    <variation>QKHKEGK</variation>
    <location>
        <begin position="287"/>
        <end position="288"/>
    </location>
</feature>
<feature type="sequence variant" id="VAR_054080" description="In dbSNP:rs12380380.">
    <original>R</original>
    <variation>K</variation>
    <location>
        <position position="154"/>
    </location>
</feature>
<feature type="sequence variant" id="VAR_031230" description="In dbSNP:rs17854317." evidence="4">
    <original>Q</original>
    <variation>K</variation>
    <location>
        <position position="169"/>
    </location>
</feature>
<feature type="sequence conflict" description="In Ref. 1; AAD34062." evidence="7" ref="1">
    <original>CPGK</original>
    <variation>LSGE</variation>
    <location>
        <begin position="18"/>
        <end position="21"/>
    </location>
</feature>
<feature type="sequence conflict" description="In Ref. 1; AAD34062." evidence="7" ref="1">
    <original>GS</original>
    <variation>RT</variation>
    <location>
        <begin position="43"/>
        <end position="44"/>
    </location>
</feature>
<feature type="sequence conflict" description="In Ref. 1; AAD34062." evidence="7" ref="1">
    <original>K</original>
    <variation>E</variation>
    <location>
        <position position="207"/>
    </location>
</feature>
<proteinExistence type="evidence at protein level"/>
<sequence>MNNLSFSELCCLFCCPPCPGKIASKLAFLPPDPTYTLMCDESGSRWTLHLSERADWQYSSREKDAIECFMTRTSKGNRIACMFVRCSPNAKYTLLFSHGNAVDLGQMSSFYIGLGSRINCNIFSYDYSGYGASSGKPTEKNLYADIEAAWLALRTRYGIRPENVIIYGQSIGTVPSVDLAARYESAAVILHSPLTSGMRVAFPDTKKTYCFDAFPNIDKISKITSPVLIIHGTEDEVIDFSHGLALFERCQRPVEPLWVEGAGHNDVELYGQYLERLKQFVSQELVNL</sequence>
<reference key="1">
    <citation type="journal article" date="2000" name="Genome Res.">
        <title>Identification of novel human genes evolutionarily conserved in Caenorhabditis elegans by comparative proteomics.</title>
        <authorList>
            <person name="Lai C.-H."/>
            <person name="Chou C.-Y."/>
            <person name="Ch'ang L.-Y."/>
            <person name="Liu C.-S."/>
            <person name="Lin W.-C."/>
        </authorList>
    </citation>
    <scope>NUCLEOTIDE SEQUENCE [LARGE SCALE MRNA] (ISOFORM 2)</scope>
</reference>
<reference key="2">
    <citation type="journal article" date="2004" name="Nat. Genet.">
        <title>Complete sequencing and characterization of 21,243 full-length human cDNAs.</title>
        <authorList>
            <person name="Ota T."/>
            <person name="Suzuki Y."/>
            <person name="Nishikawa T."/>
            <person name="Otsuki T."/>
            <person name="Sugiyama T."/>
            <person name="Irie R."/>
            <person name="Wakamatsu A."/>
            <person name="Hayashi K."/>
            <person name="Sato H."/>
            <person name="Nagai K."/>
            <person name="Kimura K."/>
            <person name="Makita H."/>
            <person name="Sekine M."/>
            <person name="Obayashi M."/>
            <person name="Nishi T."/>
            <person name="Shibahara T."/>
            <person name="Tanaka T."/>
            <person name="Ishii S."/>
            <person name="Yamamoto J."/>
            <person name="Saito K."/>
            <person name="Kawai Y."/>
            <person name="Isono Y."/>
            <person name="Nakamura Y."/>
            <person name="Nagahari K."/>
            <person name="Murakami K."/>
            <person name="Yasuda T."/>
            <person name="Iwayanagi T."/>
            <person name="Wagatsuma M."/>
            <person name="Shiratori A."/>
            <person name="Sudo H."/>
            <person name="Hosoiri T."/>
            <person name="Kaku Y."/>
            <person name="Kodaira H."/>
            <person name="Kondo H."/>
            <person name="Sugawara M."/>
            <person name="Takahashi M."/>
            <person name="Kanda K."/>
            <person name="Yokoi T."/>
            <person name="Furuya T."/>
            <person name="Kikkawa E."/>
            <person name="Omura Y."/>
            <person name="Abe K."/>
            <person name="Kamihara K."/>
            <person name="Katsuta N."/>
            <person name="Sato K."/>
            <person name="Tanikawa M."/>
            <person name="Yamazaki M."/>
            <person name="Ninomiya K."/>
            <person name="Ishibashi T."/>
            <person name="Yamashita H."/>
            <person name="Murakawa K."/>
            <person name="Fujimori K."/>
            <person name="Tanai H."/>
            <person name="Kimata M."/>
            <person name="Watanabe M."/>
            <person name="Hiraoka S."/>
            <person name="Chiba Y."/>
            <person name="Ishida S."/>
            <person name="Ono Y."/>
            <person name="Takiguchi S."/>
            <person name="Watanabe S."/>
            <person name="Yosida M."/>
            <person name="Hotuta T."/>
            <person name="Kusano J."/>
            <person name="Kanehori K."/>
            <person name="Takahashi-Fujii A."/>
            <person name="Hara H."/>
            <person name="Tanase T.-O."/>
            <person name="Nomura Y."/>
            <person name="Togiya S."/>
            <person name="Komai F."/>
            <person name="Hara R."/>
            <person name="Takeuchi K."/>
            <person name="Arita M."/>
            <person name="Imose N."/>
            <person name="Musashino K."/>
            <person name="Yuuki H."/>
            <person name="Oshima A."/>
            <person name="Sasaki N."/>
            <person name="Aotsuka S."/>
            <person name="Yoshikawa Y."/>
            <person name="Matsunawa H."/>
            <person name="Ichihara T."/>
            <person name="Shiohata N."/>
            <person name="Sano S."/>
            <person name="Moriya S."/>
            <person name="Momiyama H."/>
            <person name="Satoh N."/>
            <person name="Takami S."/>
            <person name="Terashima Y."/>
            <person name="Suzuki O."/>
            <person name="Nakagawa S."/>
            <person name="Senoh A."/>
            <person name="Mizoguchi H."/>
            <person name="Goto Y."/>
            <person name="Shimizu F."/>
            <person name="Wakebe H."/>
            <person name="Hishigaki H."/>
            <person name="Watanabe T."/>
            <person name="Sugiyama A."/>
            <person name="Takemoto M."/>
            <person name="Kawakami B."/>
            <person name="Yamazaki M."/>
            <person name="Watanabe K."/>
            <person name="Kumagai A."/>
            <person name="Itakura S."/>
            <person name="Fukuzumi Y."/>
            <person name="Fujimori Y."/>
            <person name="Komiyama M."/>
            <person name="Tashiro H."/>
            <person name="Tanigami A."/>
            <person name="Fujiwara T."/>
            <person name="Ono T."/>
            <person name="Yamada K."/>
            <person name="Fujii Y."/>
            <person name="Ozaki K."/>
            <person name="Hirao M."/>
            <person name="Ohmori Y."/>
            <person name="Kawabata A."/>
            <person name="Hikiji T."/>
            <person name="Kobatake N."/>
            <person name="Inagaki H."/>
            <person name="Ikema Y."/>
            <person name="Okamoto S."/>
            <person name="Okitani R."/>
            <person name="Kawakami T."/>
            <person name="Noguchi S."/>
            <person name="Itoh T."/>
            <person name="Shigeta K."/>
            <person name="Senba T."/>
            <person name="Matsumura K."/>
            <person name="Nakajima Y."/>
            <person name="Mizuno T."/>
            <person name="Morinaga M."/>
            <person name="Sasaki M."/>
            <person name="Togashi T."/>
            <person name="Oyama M."/>
            <person name="Hata H."/>
            <person name="Watanabe M."/>
            <person name="Komatsu T."/>
            <person name="Mizushima-Sugano J."/>
            <person name="Satoh T."/>
            <person name="Shirai Y."/>
            <person name="Takahashi Y."/>
            <person name="Nakagawa K."/>
            <person name="Okumura K."/>
            <person name="Nagase T."/>
            <person name="Nomura N."/>
            <person name="Kikuchi H."/>
            <person name="Masuho Y."/>
            <person name="Yamashita R."/>
            <person name="Nakai K."/>
            <person name="Yada T."/>
            <person name="Nakamura Y."/>
            <person name="Ohara O."/>
            <person name="Isogai T."/>
            <person name="Sugano S."/>
        </authorList>
    </citation>
    <scope>NUCLEOTIDE SEQUENCE [LARGE SCALE MRNA] (ISOFORM 1)</scope>
    <source>
        <tissue>Uterus</tissue>
    </source>
</reference>
<reference key="3">
    <citation type="journal article" date="2004" name="Nature">
        <title>DNA sequence and analysis of human chromosome 9.</title>
        <authorList>
            <person name="Humphray S.J."/>
            <person name="Oliver K."/>
            <person name="Hunt A.R."/>
            <person name="Plumb R.W."/>
            <person name="Loveland J.E."/>
            <person name="Howe K.L."/>
            <person name="Andrews T.D."/>
            <person name="Searle S."/>
            <person name="Hunt S.E."/>
            <person name="Scott C.E."/>
            <person name="Jones M.C."/>
            <person name="Ainscough R."/>
            <person name="Almeida J.P."/>
            <person name="Ambrose K.D."/>
            <person name="Ashwell R.I.S."/>
            <person name="Babbage A.K."/>
            <person name="Babbage S."/>
            <person name="Bagguley C.L."/>
            <person name="Bailey J."/>
            <person name="Banerjee R."/>
            <person name="Barker D.J."/>
            <person name="Barlow K.F."/>
            <person name="Bates K."/>
            <person name="Beasley H."/>
            <person name="Beasley O."/>
            <person name="Bird C.P."/>
            <person name="Bray-Allen S."/>
            <person name="Brown A.J."/>
            <person name="Brown J.Y."/>
            <person name="Burford D."/>
            <person name="Burrill W."/>
            <person name="Burton J."/>
            <person name="Carder C."/>
            <person name="Carter N.P."/>
            <person name="Chapman J.C."/>
            <person name="Chen Y."/>
            <person name="Clarke G."/>
            <person name="Clark S.Y."/>
            <person name="Clee C.M."/>
            <person name="Clegg S."/>
            <person name="Collier R.E."/>
            <person name="Corby N."/>
            <person name="Crosier M."/>
            <person name="Cummings A.T."/>
            <person name="Davies J."/>
            <person name="Dhami P."/>
            <person name="Dunn M."/>
            <person name="Dutta I."/>
            <person name="Dyer L.W."/>
            <person name="Earthrowl M.E."/>
            <person name="Faulkner L."/>
            <person name="Fleming C.J."/>
            <person name="Frankish A."/>
            <person name="Frankland J.A."/>
            <person name="French L."/>
            <person name="Fricker D.G."/>
            <person name="Garner P."/>
            <person name="Garnett J."/>
            <person name="Ghori J."/>
            <person name="Gilbert J.G.R."/>
            <person name="Glison C."/>
            <person name="Grafham D.V."/>
            <person name="Gribble S."/>
            <person name="Griffiths C."/>
            <person name="Griffiths-Jones S."/>
            <person name="Grocock R."/>
            <person name="Guy J."/>
            <person name="Hall R.E."/>
            <person name="Hammond S."/>
            <person name="Harley J.L."/>
            <person name="Harrison E.S.I."/>
            <person name="Hart E.A."/>
            <person name="Heath P.D."/>
            <person name="Henderson C.D."/>
            <person name="Hopkins B.L."/>
            <person name="Howard P.J."/>
            <person name="Howden P.J."/>
            <person name="Huckle E."/>
            <person name="Johnson C."/>
            <person name="Johnson D."/>
            <person name="Joy A.A."/>
            <person name="Kay M."/>
            <person name="Keenan S."/>
            <person name="Kershaw J.K."/>
            <person name="Kimberley A.M."/>
            <person name="King A."/>
            <person name="Knights A."/>
            <person name="Laird G.K."/>
            <person name="Langford C."/>
            <person name="Lawlor S."/>
            <person name="Leongamornlert D.A."/>
            <person name="Leversha M."/>
            <person name="Lloyd C."/>
            <person name="Lloyd D.M."/>
            <person name="Lovell J."/>
            <person name="Martin S."/>
            <person name="Mashreghi-Mohammadi M."/>
            <person name="Matthews L."/>
            <person name="McLaren S."/>
            <person name="McLay K.E."/>
            <person name="McMurray A."/>
            <person name="Milne S."/>
            <person name="Nickerson T."/>
            <person name="Nisbett J."/>
            <person name="Nordsiek G."/>
            <person name="Pearce A.V."/>
            <person name="Peck A.I."/>
            <person name="Porter K.M."/>
            <person name="Pandian R."/>
            <person name="Pelan S."/>
            <person name="Phillimore B."/>
            <person name="Povey S."/>
            <person name="Ramsey Y."/>
            <person name="Rand V."/>
            <person name="Scharfe M."/>
            <person name="Sehra H.K."/>
            <person name="Shownkeen R."/>
            <person name="Sims S.K."/>
            <person name="Skuce C.D."/>
            <person name="Smith M."/>
            <person name="Steward C.A."/>
            <person name="Swarbreck D."/>
            <person name="Sycamore N."/>
            <person name="Tester J."/>
            <person name="Thorpe A."/>
            <person name="Tracey A."/>
            <person name="Tromans A."/>
            <person name="Thomas D.W."/>
            <person name="Wall M."/>
            <person name="Wallis J.M."/>
            <person name="West A.P."/>
            <person name="Whitehead S.L."/>
            <person name="Willey D.L."/>
            <person name="Williams S.A."/>
            <person name="Wilming L."/>
            <person name="Wray P.W."/>
            <person name="Young L."/>
            <person name="Ashurst J.L."/>
            <person name="Coulson A."/>
            <person name="Blocker H."/>
            <person name="Durbin R.M."/>
            <person name="Sulston J.E."/>
            <person name="Hubbard T."/>
            <person name="Jackson M.J."/>
            <person name="Bentley D.R."/>
            <person name="Beck S."/>
            <person name="Rogers J."/>
            <person name="Dunham I."/>
        </authorList>
    </citation>
    <scope>NUCLEOTIDE SEQUENCE [LARGE SCALE GENOMIC DNA]</scope>
</reference>
<reference key="4">
    <citation type="submission" date="2005-07" db="EMBL/GenBank/DDBJ databases">
        <authorList>
            <person name="Mural R.J."/>
            <person name="Istrail S."/>
            <person name="Sutton G.G."/>
            <person name="Florea L."/>
            <person name="Halpern A.L."/>
            <person name="Mobarry C.M."/>
            <person name="Lippert R."/>
            <person name="Walenz B."/>
            <person name="Shatkay H."/>
            <person name="Dew I."/>
            <person name="Miller J.R."/>
            <person name="Flanigan M.J."/>
            <person name="Edwards N.J."/>
            <person name="Bolanos R."/>
            <person name="Fasulo D."/>
            <person name="Halldorsson B.V."/>
            <person name="Hannenhalli S."/>
            <person name="Turner R."/>
            <person name="Yooseph S."/>
            <person name="Lu F."/>
            <person name="Nusskern D.R."/>
            <person name="Shue B.C."/>
            <person name="Zheng X.H."/>
            <person name="Zhong F."/>
            <person name="Delcher A.L."/>
            <person name="Huson D.H."/>
            <person name="Kravitz S.A."/>
            <person name="Mouchard L."/>
            <person name="Reinert K."/>
            <person name="Remington K.A."/>
            <person name="Clark A.G."/>
            <person name="Waterman M.S."/>
            <person name="Eichler E.E."/>
            <person name="Adams M.D."/>
            <person name="Hunkapiller M.W."/>
            <person name="Myers E.W."/>
            <person name="Venter J.C."/>
        </authorList>
    </citation>
    <scope>NUCLEOTIDE SEQUENCE [LARGE SCALE GENOMIC DNA]</scope>
</reference>
<reference key="5">
    <citation type="journal article" date="2004" name="Genome Res.">
        <title>The status, quality, and expansion of the NIH full-length cDNA project: the Mammalian Gene Collection (MGC).</title>
        <authorList>
            <consortium name="The MGC Project Team"/>
        </authorList>
    </citation>
    <scope>NUCLEOTIDE SEQUENCE [LARGE SCALE MRNA] (ISOFORM 1)</scope>
    <scope>VARIANT LYS-169</scope>
    <source>
        <tissue>Brain</tissue>
        <tissue>Skin</tissue>
    </source>
</reference>
<reference key="6">
    <citation type="journal article" date="2015" name="Elife">
        <title>ABHD17 proteins are novel protein depalmitoylases that regulate N-Ras palmitate turnover and subcellular localization.</title>
        <authorList>
            <person name="Lin D.T."/>
            <person name="Conibear E."/>
        </authorList>
    </citation>
    <scope>FUNCTION</scope>
    <scope>CATALYTIC ACTIVITY</scope>
    <scope>ACTIVITY REGULATION</scope>
</reference>
<reference key="7">
    <citation type="journal article" date="2015" name="Proteomics">
        <title>N-terminome analysis of the human mitochondrial proteome.</title>
        <authorList>
            <person name="Vaca Jacome A.S."/>
            <person name="Rabilloud T."/>
            <person name="Schaeffer-Reiss C."/>
            <person name="Rompais M."/>
            <person name="Ayoub D."/>
            <person name="Lane L."/>
            <person name="Bairoch A."/>
            <person name="Van Dorsselaer A."/>
            <person name="Carapito C."/>
        </authorList>
    </citation>
    <scope>IDENTIFICATION BY MASS SPECTROMETRY [LARGE SCALE ANALYSIS]</scope>
</reference>
<evidence type="ECO:0000250" key="1">
    <source>
        <dbReference type="UniProtKB" id="O75608"/>
    </source>
</evidence>
<evidence type="ECO:0000250" key="2">
    <source>
        <dbReference type="UniProtKB" id="Q7M759"/>
    </source>
</evidence>
<evidence type="ECO:0000250" key="3">
    <source>
        <dbReference type="UniProtKB" id="Q96GS6"/>
    </source>
</evidence>
<evidence type="ECO:0000269" key="4">
    <source>
    </source>
</evidence>
<evidence type="ECO:0000269" key="5">
    <source>
    </source>
</evidence>
<evidence type="ECO:0000303" key="6">
    <source>
    </source>
</evidence>
<evidence type="ECO:0000305" key="7"/>
<evidence type="ECO:0000312" key="8">
    <source>
        <dbReference type="HGNC" id="HGNC:24278"/>
    </source>
</evidence>
<organism>
    <name type="scientific">Homo sapiens</name>
    <name type="common">Human</name>
    <dbReference type="NCBI Taxonomy" id="9606"/>
    <lineage>
        <taxon>Eukaryota</taxon>
        <taxon>Metazoa</taxon>
        <taxon>Chordata</taxon>
        <taxon>Craniata</taxon>
        <taxon>Vertebrata</taxon>
        <taxon>Euteleostomi</taxon>
        <taxon>Mammalia</taxon>
        <taxon>Eutheria</taxon>
        <taxon>Euarchontoglires</taxon>
        <taxon>Primates</taxon>
        <taxon>Haplorrhini</taxon>
        <taxon>Catarrhini</taxon>
        <taxon>Hominidae</taxon>
        <taxon>Homo</taxon>
    </lineage>
</organism>
<comment type="function">
    <text evidence="2 5">Hydrolyzes fatty acids from S-acylated cysteine residues in proteins (PubMed:26701913). Has depalmitoylating activity towards DLG4/PSD95 (PubMed:26701913). Has depalmitoylating activity towards GAP43 (By similarity). Has depalmitoylating activity towards MAP6 (By similarity). Has depalmitoylating activity towards NRAS (PubMed:26701913).</text>
</comment>
<comment type="catalytic activity">
    <reaction evidence="5">
        <text>S-hexadecanoyl-L-cysteinyl-[protein] + H2O = L-cysteinyl-[protein] + hexadecanoate + H(+)</text>
        <dbReference type="Rhea" id="RHEA:19233"/>
        <dbReference type="Rhea" id="RHEA-COMP:10131"/>
        <dbReference type="Rhea" id="RHEA-COMP:11032"/>
        <dbReference type="ChEBI" id="CHEBI:7896"/>
        <dbReference type="ChEBI" id="CHEBI:15377"/>
        <dbReference type="ChEBI" id="CHEBI:15378"/>
        <dbReference type="ChEBI" id="CHEBI:29950"/>
        <dbReference type="ChEBI" id="CHEBI:74151"/>
        <dbReference type="EC" id="3.1.2.22"/>
    </reaction>
</comment>
<comment type="activity regulation">
    <text evidence="5">Inhibited by palmostatin-B.</text>
</comment>
<comment type="subcellular location">
    <subcellularLocation>
        <location evidence="2">Cell membrane</location>
        <topology evidence="2">Lipid-anchor</topology>
        <orientation evidence="2">Cytoplasmic side</orientation>
    </subcellularLocation>
    <subcellularLocation>
        <location evidence="2">Recycling endosome membrane</location>
        <topology evidence="2">Lipid-anchor</topology>
        <orientation evidence="2">Cytoplasmic side</orientation>
    </subcellularLocation>
    <subcellularLocation>
        <location evidence="2">Cell projection</location>
        <location evidence="2">Dendritic spine</location>
    </subcellularLocation>
    <subcellularLocation>
        <location evidence="2">Postsynaptic density membrane</location>
    </subcellularLocation>
</comment>
<comment type="alternative products">
    <event type="alternative splicing"/>
    <isoform>
        <id>Q5VST6-1</id>
        <name>1</name>
        <sequence type="displayed"/>
    </isoform>
    <isoform>
        <id>Q5VST6-2</id>
        <name>2</name>
        <sequence type="described" ref="VSP_023975"/>
    </isoform>
</comment>
<comment type="PTM">
    <text evidence="2">Palmitoylated on cysteine residues located in a cysteine cluster at the N-terminus which promotes membrane localization. Palmitoylation is required for post-synaptic localization and for depalmitoylating activity towards DLG4/PSD95.</text>
</comment>
<comment type="similarity">
    <text evidence="7">Belongs to the AB hydrolase superfamily. ABHD17 family.</text>
</comment>
<keyword id="KW-0025">Alternative splicing</keyword>
<keyword id="KW-1003">Cell membrane</keyword>
<keyword id="KW-0966">Cell projection</keyword>
<keyword id="KW-0967">Endosome</keyword>
<keyword id="KW-0378">Hydrolase</keyword>
<keyword id="KW-0449">Lipoprotein</keyword>
<keyword id="KW-0472">Membrane</keyword>
<keyword id="KW-0564">Palmitate</keyword>
<keyword id="KW-0597">Phosphoprotein</keyword>
<keyword id="KW-0628">Postsynaptic cell membrane</keyword>
<keyword id="KW-1267">Proteomics identification</keyword>
<keyword id="KW-1185">Reference proteome</keyword>
<keyword id="KW-0770">Synapse</keyword>
<protein>
    <recommendedName>
        <fullName evidence="7">Alpha/beta hydrolase domain-containing protein 17B</fullName>
        <shortName evidence="8">Abhydrolase domain-containing protein 17B</shortName>
        <ecNumber evidence="5">3.1.2.22</ecNumber>
    </recommendedName>
</protein>
<name>AB17B_HUMAN</name>
<accession>Q5VST6</accession>
<accession>A8KAJ5</accession>
<accession>Q5VST7</accession>
<accession>Q86YB6</accession>
<accession>Q8IY03</accession>
<accession>Q9Y377</accession>
<gene>
    <name evidence="8" type="primary">ABHD17B</name>
    <name type="synonym">C9orf77</name>
    <name type="synonym">FAM108B1</name>
    <name type="ORF">CGI-67</name>
</gene>
<dbReference type="EC" id="3.1.2.22" evidence="5"/>
<dbReference type="EMBL" id="AF151825">
    <property type="protein sequence ID" value="AAD34062.1"/>
    <property type="molecule type" value="mRNA"/>
</dbReference>
<dbReference type="EMBL" id="AK293060">
    <property type="protein sequence ID" value="BAF85749.1"/>
    <property type="molecule type" value="mRNA"/>
</dbReference>
<dbReference type="EMBL" id="AL138751">
    <property type="status" value="NOT_ANNOTATED_CDS"/>
    <property type="molecule type" value="Genomic_DNA"/>
</dbReference>
<dbReference type="EMBL" id="AL671309">
    <property type="status" value="NOT_ANNOTATED_CDS"/>
    <property type="molecule type" value="Genomic_DNA"/>
</dbReference>
<dbReference type="EMBL" id="CH471089">
    <property type="protein sequence ID" value="EAW62521.1"/>
    <property type="molecule type" value="Genomic_DNA"/>
</dbReference>
<dbReference type="EMBL" id="BC038390">
    <property type="protein sequence ID" value="AAH38390.2"/>
    <property type="molecule type" value="mRNA"/>
</dbReference>
<dbReference type="EMBL" id="BC044576">
    <property type="protein sequence ID" value="AAH44576.1"/>
    <property type="molecule type" value="mRNA"/>
</dbReference>
<dbReference type="CCDS" id="CCDS35042.1">
    <molecule id="Q5VST6-2"/>
</dbReference>
<dbReference type="CCDS" id="CCDS35043.1">
    <molecule id="Q5VST6-1"/>
</dbReference>
<dbReference type="RefSeq" id="NP_001020951.1">
    <molecule id="Q5VST6-1"/>
    <property type="nucleotide sequence ID" value="NM_001025780.3"/>
</dbReference>
<dbReference type="RefSeq" id="NP_057098.2">
    <molecule id="Q5VST6-2"/>
    <property type="nucleotide sequence ID" value="NM_016014.4"/>
</dbReference>
<dbReference type="RefSeq" id="XP_006717197.2">
    <molecule id="Q5VST6-2"/>
    <property type="nucleotide sequence ID" value="XM_006717134.4"/>
</dbReference>
<dbReference type="RefSeq" id="XP_016870276.1">
    <molecule id="Q5VST6-2"/>
    <property type="nucleotide sequence ID" value="XM_017014787.3"/>
</dbReference>
<dbReference type="RefSeq" id="XP_016870277.1">
    <molecule id="Q5VST6-1"/>
    <property type="nucleotide sequence ID" value="XM_017014788.3"/>
</dbReference>
<dbReference type="RefSeq" id="XP_016870278.1">
    <molecule id="Q5VST6-1"/>
    <property type="nucleotide sequence ID" value="XM_017014789.3"/>
</dbReference>
<dbReference type="RefSeq" id="XP_047279402.1">
    <molecule id="Q5VST6-2"/>
    <property type="nucleotide sequence ID" value="XM_047423446.1"/>
</dbReference>
<dbReference type="RefSeq" id="XP_054219026.1">
    <molecule id="Q5VST6-2"/>
    <property type="nucleotide sequence ID" value="XM_054363051.1"/>
</dbReference>
<dbReference type="RefSeq" id="XP_054219027.1">
    <molecule id="Q5VST6-2"/>
    <property type="nucleotide sequence ID" value="XM_054363052.1"/>
</dbReference>
<dbReference type="RefSeq" id="XP_054219028.1">
    <molecule id="Q5VST6-2"/>
    <property type="nucleotide sequence ID" value="XM_054363053.1"/>
</dbReference>
<dbReference type="RefSeq" id="XP_054219029.1">
    <molecule id="Q5VST6-1"/>
    <property type="nucleotide sequence ID" value="XM_054363054.1"/>
</dbReference>
<dbReference type="RefSeq" id="XP_054219030.1">
    <molecule id="Q5VST6-1"/>
    <property type="nucleotide sequence ID" value="XM_054363055.1"/>
</dbReference>
<dbReference type="SMR" id="Q5VST6"/>
<dbReference type="BioGRID" id="119293">
    <property type="interactions" value="62"/>
</dbReference>
<dbReference type="FunCoup" id="Q5VST6">
    <property type="interactions" value="1807"/>
</dbReference>
<dbReference type="IntAct" id="Q5VST6">
    <property type="interactions" value="56"/>
</dbReference>
<dbReference type="STRING" id="9606.ENSP00000366240"/>
<dbReference type="ChEMBL" id="CHEMBL2189132"/>
<dbReference type="ESTHER" id="human-ABHD17B">
    <property type="family name" value="ABHD17-depalmitoylase"/>
</dbReference>
<dbReference type="MEROPS" id="S09.055"/>
<dbReference type="iPTMnet" id="Q5VST6"/>
<dbReference type="PhosphoSitePlus" id="Q5VST6"/>
<dbReference type="SwissPalm" id="Q5VST6"/>
<dbReference type="BioMuta" id="ABHD17B"/>
<dbReference type="DMDM" id="74746845"/>
<dbReference type="jPOST" id="Q5VST6"/>
<dbReference type="MassIVE" id="Q5VST6"/>
<dbReference type="PaxDb" id="9606-ENSP00000366240"/>
<dbReference type="PeptideAtlas" id="Q5VST6"/>
<dbReference type="ProteomicsDB" id="65278">
    <molecule id="Q5VST6-1"/>
</dbReference>
<dbReference type="ProteomicsDB" id="65279">
    <molecule id="Q5VST6-2"/>
</dbReference>
<dbReference type="Pumba" id="Q5VST6"/>
<dbReference type="Antibodypedia" id="26944">
    <property type="antibodies" value="33 antibodies from 14 providers"/>
</dbReference>
<dbReference type="DNASU" id="51104"/>
<dbReference type="Ensembl" id="ENST00000333421.7">
    <molecule id="Q5VST6-1"/>
    <property type="protein sequence ID" value="ENSP00000330222.6"/>
    <property type="gene ID" value="ENSG00000107362.14"/>
</dbReference>
<dbReference type="Ensembl" id="ENST00000377041.6">
    <molecule id="Q5VST6-2"/>
    <property type="protein sequence ID" value="ENSP00000366240.2"/>
    <property type="gene ID" value="ENSG00000107362.14"/>
</dbReference>
<dbReference type="GeneID" id="51104"/>
<dbReference type="KEGG" id="hsa:51104"/>
<dbReference type="MANE-Select" id="ENST00000333421.7">
    <property type="protein sequence ID" value="ENSP00000330222.6"/>
    <property type="RefSeq nucleotide sequence ID" value="NM_001025780.3"/>
    <property type="RefSeq protein sequence ID" value="NP_001020951.1"/>
</dbReference>
<dbReference type="UCSC" id="uc004ail.4">
    <molecule id="Q5VST6-1"/>
    <property type="organism name" value="human"/>
</dbReference>
<dbReference type="AGR" id="HGNC:24278"/>
<dbReference type="CTD" id="51104"/>
<dbReference type="GeneCards" id="ABHD17B"/>
<dbReference type="HGNC" id="HGNC:24278">
    <property type="gene designation" value="ABHD17B"/>
</dbReference>
<dbReference type="HPA" id="ENSG00000107362">
    <property type="expression patterns" value="Low tissue specificity"/>
</dbReference>
<dbReference type="MIM" id="617943">
    <property type="type" value="gene"/>
</dbReference>
<dbReference type="neXtProt" id="NX_Q5VST6"/>
<dbReference type="OpenTargets" id="ENSG00000107362"/>
<dbReference type="PharmGKB" id="PA162385624"/>
<dbReference type="VEuPathDB" id="HostDB:ENSG00000107362"/>
<dbReference type="eggNOG" id="KOG1552">
    <property type="taxonomic scope" value="Eukaryota"/>
</dbReference>
<dbReference type="GeneTree" id="ENSGT00940000157611"/>
<dbReference type="HOGENOM" id="CLU_029375_5_4_1"/>
<dbReference type="InParanoid" id="Q5VST6"/>
<dbReference type="OMA" id="GENIYML"/>
<dbReference type="OrthoDB" id="446723at2759"/>
<dbReference type="PAN-GO" id="Q5VST6">
    <property type="GO annotations" value="5 GO annotations based on evolutionary models"/>
</dbReference>
<dbReference type="PhylomeDB" id="Q5VST6"/>
<dbReference type="TreeFam" id="TF314365"/>
<dbReference type="PathwayCommons" id="Q5VST6"/>
<dbReference type="Reactome" id="R-HSA-9648002">
    <property type="pathway name" value="RAS processing"/>
</dbReference>
<dbReference type="SignaLink" id="Q5VST6"/>
<dbReference type="BioGRID-ORCS" id="51104">
    <property type="hits" value="18 hits in 1148 CRISPR screens"/>
</dbReference>
<dbReference type="ChiTaRS" id="ABHD17B">
    <property type="organism name" value="human"/>
</dbReference>
<dbReference type="GenomeRNAi" id="51104"/>
<dbReference type="Pharos" id="Q5VST6">
    <property type="development level" value="Tbio"/>
</dbReference>
<dbReference type="PRO" id="PR:Q5VST6"/>
<dbReference type="Proteomes" id="UP000005640">
    <property type="component" value="Chromosome 9"/>
</dbReference>
<dbReference type="RNAct" id="Q5VST6">
    <property type="molecule type" value="protein"/>
</dbReference>
<dbReference type="Bgee" id="ENSG00000107362">
    <property type="expression patterns" value="Expressed in endothelial cell and 183 other cell types or tissues"/>
</dbReference>
<dbReference type="ExpressionAtlas" id="Q5VST6">
    <property type="expression patterns" value="baseline and differential"/>
</dbReference>
<dbReference type="GO" id="GO:0043197">
    <property type="term" value="C:dendritic spine"/>
    <property type="evidence" value="ECO:0007669"/>
    <property type="project" value="UniProtKB-SubCell"/>
</dbReference>
<dbReference type="GO" id="GO:0010008">
    <property type="term" value="C:endosome membrane"/>
    <property type="evidence" value="ECO:0000318"/>
    <property type="project" value="GO_Central"/>
</dbReference>
<dbReference type="GO" id="GO:0098978">
    <property type="term" value="C:glutamatergic synapse"/>
    <property type="evidence" value="ECO:0007669"/>
    <property type="project" value="Ensembl"/>
</dbReference>
<dbReference type="GO" id="GO:0016020">
    <property type="term" value="C:membrane"/>
    <property type="evidence" value="ECO:0007005"/>
    <property type="project" value="UniProtKB"/>
</dbReference>
<dbReference type="GO" id="GO:0005886">
    <property type="term" value="C:plasma membrane"/>
    <property type="evidence" value="ECO:0000318"/>
    <property type="project" value="GO_Central"/>
</dbReference>
<dbReference type="GO" id="GO:0098839">
    <property type="term" value="C:postsynaptic density membrane"/>
    <property type="evidence" value="ECO:0007669"/>
    <property type="project" value="UniProtKB-SubCell"/>
</dbReference>
<dbReference type="GO" id="GO:0098944">
    <property type="term" value="C:postsynaptic recycling endosome membrane"/>
    <property type="evidence" value="ECO:0007669"/>
    <property type="project" value="Ensembl"/>
</dbReference>
<dbReference type="GO" id="GO:0055038">
    <property type="term" value="C:recycling endosome membrane"/>
    <property type="evidence" value="ECO:0007669"/>
    <property type="project" value="UniProtKB-SubCell"/>
</dbReference>
<dbReference type="GO" id="GO:0008474">
    <property type="term" value="F:palmitoyl-(protein) hydrolase activity"/>
    <property type="evidence" value="ECO:0000315"/>
    <property type="project" value="UniProtKB"/>
</dbReference>
<dbReference type="GO" id="GO:1902817">
    <property type="term" value="P:negative regulation of protein localization to microtubule"/>
    <property type="evidence" value="ECO:0007669"/>
    <property type="project" value="Ensembl"/>
</dbReference>
<dbReference type="GO" id="GO:1905668">
    <property type="term" value="P:positive regulation of protein localization to endosome"/>
    <property type="evidence" value="ECO:0007669"/>
    <property type="project" value="Ensembl"/>
</dbReference>
<dbReference type="GO" id="GO:0002084">
    <property type="term" value="P:protein depalmitoylation"/>
    <property type="evidence" value="ECO:0000315"/>
    <property type="project" value="UniProtKB"/>
</dbReference>
<dbReference type="GO" id="GO:1902950">
    <property type="term" value="P:regulation of dendritic spine maintenance"/>
    <property type="evidence" value="ECO:0007669"/>
    <property type="project" value="Ensembl"/>
</dbReference>
<dbReference type="GO" id="GO:0099175">
    <property type="term" value="P:regulation of postsynapse organization"/>
    <property type="evidence" value="ECO:0000318"/>
    <property type="project" value="GO_Central"/>
</dbReference>
<dbReference type="GO" id="GO:1902473">
    <property type="term" value="P:regulation of protein localization to synapse"/>
    <property type="evidence" value="ECO:0007669"/>
    <property type="project" value="Ensembl"/>
</dbReference>
<dbReference type="FunFam" id="3.40.50.1820:FF:000008">
    <property type="entry name" value="Alpha/beta hydrolase domain-containing protein 17B"/>
    <property type="match status" value="1"/>
</dbReference>
<dbReference type="Gene3D" id="3.40.50.1820">
    <property type="entry name" value="alpha/beta hydrolase"/>
    <property type="match status" value="1"/>
</dbReference>
<dbReference type="InterPro" id="IPR029058">
    <property type="entry name" value="AB_hydrolase_fold"/>
</dbReference>
<dbReference type="InterPro" id="IPR022742">
    <property type="entry name" value="Hydrolase_4"/>
</dbReference>
<dbReference type="PANTHER" id="PTHR12277">
    <property type="entry name" value="ALPHA/BETA HYDROLASE DOMAIN-CONTAINING PROTEIN"/>
    <property type="match status" value="1"/>
</dbReference>
<dbReference type="PANTHER" id="PTHR12277:SF48">
    <property type="entry name" value="ALPHA_BETA HYDROLASE DOMAIN-CONTAINING PROTEIN 17B"/>
    <property type="match status" value="1"/>
</dbReference>
<dbReference type="Pfam" id="PF12146">
    <property type="entry name" value="Hydrolase_4"/>
    <property type="match status" value="1"/>
</dbReference>
<dbReference type="SUPFAM" id="SSF53474">
    <property type="entry name" value="alpha/beta-Hydrolases"/>
    <property type="match status" value="1"/>
</dbReference>